<feature type="chain" id="PRO_1000140688" description="Small ribosomal subunit protein uS4">
    <location>
        <begin position="1"/>
        <end position="205"/>
    </location>
</feature>
<feature type="domain" description="S4 RNA-binding" evidence="1">
    <location>
        <begin position="94"/>
        <end position="157"/>
    </location>
</feature>
<feature type="region of interest" description="Disordered" evidence="2">
    <location>
        <begin position="20"/>
        <end position="46"/>
    </location>
</feature>
<gene>
    <name evidence="1" type="primary">rpsD</name>
    <name type="ordered locus">Bind_1256</name>
</gene>
<organism>
    <name type="scientific">Beijerinckia indica subsp. indica (strain ATCC 9039 / DSM 1715 / NCIMB 8712)</name>
    <dbReference type="NCBI Taxonomy" id="395963"/>
    <lineage>
        <taxon>Bacteria</taxon>
        <taxon>Pseudomonadati</taxon>
        <taxon>Pseudomonadota</taxon>
        <taxon>Alphaproteobacteria</taxon>
        <taxon>Hyphomicrobiales</taxon>
        <taxon>Beijerinckiaceae</taxon>
        <taxon>Beijerinckia</taxon>
    </lineage>
</organism>
<protein>
    <recommendedName>
        <fullName evidence="1">Small ribosomal subunit protein uS4</fullName>
    </recommendedName>
    <alternativeName>
        <fullName evidence="3">30S ribosomal protein S4</fullName>
    </alternativeName>
</protein>
<sequence length="205" mass="23647">MTKRAEAKYKIDRRMGQNIWGRSKSPVNRREYGPGQHGQRRKGKLSDFGTQLKAKQKLKGYYGNISEKQFRKYYAEAIRMKGDSGDNLIGLLERRLDAVVYRAKFVPTVFASRQFINHGHIKVNGRRVNIASYQVRVGDVIEVKEASRQLTLVLEASQLAERDVPEYYDVDHGKMSAKVTRIPLPNEVPYPVIMEPNLVIEFYSR</sequence>
<proteinExistence type="inferred from homology"/>
<reference key="1">
    <citation type="journal article" date="2010" name="J. Bacteriol.">
        <title>Complete genome sequence of Beijerinckia indica subsp. indica.</title>
        <authorList>
            <person name="Tamas I."/>
            <person name="Dedysh S.N."/>
            <person name="Liesack W."/>
            <person name="Stott M.B."/>
            <person name="Alam M."/>
            <person name="Murrell J.C."/>
            <person name="Dunfield P.F."/>
        </authorList>
    </citation>
    <scope>NUCLEOTIDE SEQUENCE [LARGE SCALE GENOMIC DNA]</scope>
    <source>
        <strain>ATCC 9039 / DSM 1715 / NCIMB 8712</strain>
    </source>
</reference>
<keyword id="KW-1185">Reference proteome</keyword>
<keyword id="KW-0687">Ribonucleoprotein</keyword>
<keyword id="KW-0689">Ribosomal protein</keyword>
<keyword id="KW-0694">RNA-binding</keyword>
<keyword id="KW-0699">rRNA-binding</keyword>
<evidence type="ECO:0000255" key="1">
    <source>
        <dbReference type="HAMAP-Rule" id="MF_01306"/>
    </source>
</evidence>
<evidence type="ECO:0000256" key="2">
    <source>
        <dbReference type="SAM" id="MobiDB-lite"/>
    </source>
</evidence>
<evidence type="ECO:0000305" key="3"/>
<comment type="function">
    <text evidence="1">One of the primary rRNA binding proteins, it binds directly to 16S rRNA where it nucleates assembly of the body of the 30S subunit.</text>
</comment>
<comment type="function">
    <text evidence="1">With S5 and S12 plays an important role in translational accuracy.</text>
</comment>
<comment type="subunit">
    <text evidence="1">Part of the 30S ribosomal subunit. Contacts protein S5. The interaction surface between S4 and S5 is involved in control of translational fidelity.</text>
</comment>
<comment type="similarity">
    <text evidence="1">Belongs to the universal ribosomal protein uS4 family.</text>
</comment>
<dbReference type="EMBL" id="CP001016">
    <property type="protein sequence ID" value="ACB94897.1"/>
    <property type="molecule type" value="Genomic_DNA"/>
</dbReference>
<dbReference type="RefSeq" id="WP_012384254.1">
    <property type="nucleotide sequence ID" value="NC_010581.1"/>
</dbReference>
<dbReference type="SMR" id="B2IJM5"/>
<dbReference type="STRING" id="395963.Bind_1256"/>
<dbReference type="KEGG" id="bid:Bind_1256"/>
<dbReference type="eggNOG" id="COG0522">
    <property type="taxonomic scope" value="Bacteria"/>
</dbReference>
<dbReference type="HOGENOM" id="CLU_092403_0_0_5"/>
<dbReference type="OrthoDB" id="9803672at2"/>
<dbReference type="Proteomes" id="UP000001695">
    <property type="component" value="Chromosome"/>
</dbReference>
<dbReference type="GO" id="GO:0015935">
    <property type="term" value="C:small ribosomal subunit"/>
    <property type="evidence" value="ECO:0007669"/>
    <property type="project" value="InterPro"/>
</dbReference>
<dbReference type="GO" id="GO:0019843">
    <property type="term" value="F:rRNA binding"/>
    <property type="evidence" value="ECO:0007669"/>
    <property type="project" value="UniProtKB-UniRule"/>
</dbReference>
<dbReference type="GO" id="GO:0003735">
    <property type="term" value="F:structural constituent of ribosome"/>
    <property type="evidence" value="ECO:0007669"/>
    <property type="project" value="InterPro"/>
</dbReference>
<dbReference type="GO" id="GO:0042274">
    <property type="term" value="P:ribosomal small subunit biogenesis"/>
    <property type="evidence" value="ECO:0007669"/>
    <property type="project" value="TreeGrafter"/>
</dbReference>
<dbReference type="GO" id="GO:0006412">
    <property type="term" value="P:translation"/>
    <property type="evidence" value="ECO:0007669"/>
    <property type="project" value="UniProtKB-UniRule"/>
</dbReference>
<dbReference type="CDD" id="cd00165">
    <property type="entry name" value="S4"/>
    <property type="match status" value="1"/>
</dbReference>
<dbReference type="FunFam" id="3.10.290.10:FF:000001">
    <property type="entry name" value="30S ribosomal protein S4"/>
    <property type="match status" value="1"/>
</dbReference>
<dbReference type="Gene3D" id="1.10.1050.10">
    <property type="entry name" value="Ribosomal Protein S4 Delta 41, Chain A, domain 1"/>
    <property type="match status" value="1"/>
</dbReference>
<dbReference type="Gene3D" id="3.10.290.10">
    <property type="entry name" value="RNA-binding S4 domain"/>
    <property type="match status" value="1"/>
</dbReference>
<dbReference type="HAMAP" id="MF_01306_B">
    <property type="entry name" value="Ribosomal_uS4_B"/>
    <property type="match status" value="1"/>
</dbReference>
<dbReference type="InterPro" id="IPR022801">
    <property type="entry name" value="Ribosomal_uS4"/>
</dbReference>
<dbReference type="InterPro" id="IPR005709">
    <property type="entry name" value="Ribosomal_uS4_bac-type"/>
</dbReference>
<dbReference type="InterPro" id="IPR018079">
    <property type="entry name" value="Ribosomal_uS4_CS"/>
</dbReference>
<dbReference type="InterPro" id="IPR001912">
    <property type="entry name" value="Ribosomal_uS4_N"/>
</dbReference>
<dbReference type="InterPro" id="IPR002942">
    <property type="entry name" value="S4_RNA-bd"/>
</dbReference>
<dbReference type="InterPro" id="IPR036986">
    <property type="entry name" value="S4_RNA-bd_sf"/>
</dbReference>
<dbReference type="NCBIfam" id="NF003717">
    <property type="entry name" value="PRK05327.1"/>
    <property type="match status" value="1"/>
</dbReference>
<dbReference type="NCBIfam" id="TIGR01017">
    <property type="entry name" value="rpsD_bact"/>
    <property type="match status" value="1"/>
</dbReference>
<dbReference type="PANTHER" id="PTHR11831">
    <property type="entry name" value="30S 40S RIBOSOMAL PROTEIN"/>
    <property type="match status" value="1"/>
</dbReference>
<dbReference type="PANTHER" id="PTHR11831:SF4">
    <property type="entry name" value="SMALL RIBOSOMAL SUBUNIT PROTEIN US4M"/>
    <property type="match status" value="1"/>
</dbReference>
<dbReference type="Pfam" id="PF00163">
    <property type="entry name" value="Ribosomal_S4"/>
    <property type="match status" value="1"/>
</dbReference>
<dbReference type="Pfam" id="PF01479">
    <property type="entry name" value="S4"/>
    <property type="match status" value="1"/>
</dbReference>
<dbReference type="SMART" id="SM01390">
    <property type="entry name" value="Ribosomal_S4"/>
    <property type="match status" value="1"/>
</dbReference>
<dbReference type="SMART" id="SM00363">
    <property type="entry name" value="S4"/>
    <property type="match status" value="1"/>
</dbReference>
<dbReference type="SUPFAM" id="SSF55174">
    <property type="entry name" value="Alpha-L RNA-binding motif"/>
    <property type="match status" value="1"/>
</dbReference>
<dbReference type="PROSITE" id="PS00632">
    <property type="entry name" value="RIBOSOMAL_S4"/>
    <property type="match status" value="1"/>
</dbReference>
<dbReference type="PROSITE" id="PS50889">
    <property type="entry name" value="S4"/>
    <property type="match status" value="1"/>
</dbReference>
<accession>B2IJM5</accession>
<name>RS4_BEII9</name>